<feature type="chain" id="PRO_1000062950" description="Transcriptional regulator MraZ">
    <location>
        <begin position="1"/>
        <end position="152"/>
    </location>
</feature>
<feature type="domain" description="SpoVT-AbrB 1" evidence="2">
    <location>
        <begin position="5"/>
        <end position="52"/>
    </location>
</feature>
<feature type="domain" description="SpoVT-AbrB 2" evidence="2">
    <location>
        <begin position="81"/>
        <end position="124"/>
    </location>
</feature>
<name>MRAZ_YERPA</name>
<organism>
    <name type="scientific">Yersinia pestis bv. Antiqua (strain Antiqua)</name>
    <dbReference type="NCBI Taxonomy" id="360102"/>
    <lineage>
        <taxon>Bacteria</taxon>
        <taxon>Pseudomonadati</taxon>
        <taxon>Pseudomonadota</taxon>
        <taxon>Gammaproteobacteria</taxon>
        <taxon>Enterobacterales</taxon>
        <taxon>Yersiniaceae</taxon>
        <taxon>Yersinia</taxon>
    </lineage>
</organism>
<protein>
    <recommendedName>
        <fullName>Transcriptional regulator MraZ</fullName>
    </recommendedName>
</protein>
<proteinExistence type="inferred from homology"/>
<comment type="function">
    <text evidence="1">Negatively regulates its own expression and that of the subsequent genes in the proximal part of the division and cell wall (dcw) gene cluster. Acts by binding directly to DNA. May also regulate the expression of genes outside the dcw cluster.</text>
</comment>
<comment type="subunit">
    <text evidence="1">Forms oligomers.</text>
</comment>
<comment type="subcellular location">
    <subcellularLocation>
        <location evidence="1">Cytoplasm</location>
        <location evidence="1">Nucleoid</location>
    </subcellularLocation>
</comment>
<comment type="similarity">
    <text evidence="1">Belongs to the MraZ family.</text>
</comment>
<evidence type="ECO:0000255" key="1">
    <source>
        <dbReference type="HAMAP-Rule" id="MF_01008"/>
    </source>
</evidence>
<evidence type="ECO:0000255" key="2">
    <source>
        <dbReference type="PROSITE-ProRule" id="PRU01076"/>
    </source>
</evidence>
<dbReference type="EMBL" id="CP000308">
    <property type="protein sequence ID" value="ABG15517.1"/>
    <property type="molecule type" value="Genomic_DNA"/>
</dbReference>
<dbReference type="RefSeq" id="WP_002210443.1">
    <property type="nucleotide sequence ID" value="NZ_CP009906.1"/>
</dbReference>
<dbReference type="SMR" id="Q1C205"/>
<dbReference type="GeneID" id="57974069"/>
<dbReference type="KEGG" id="ypa:YPA_3555"/>
<dbReference type="Proteomes" id="UP000001971">
    <property type="component" value="Chromosome"/>
</dbReference>
<dbReference type="GO" id="GO:0005737">
    <property type="term" value="C:cytoplasm"/>
    <property type="evidence" value="ECO:0007669"/>
    <property type="project" value="UniProtKB-UniRule"/>
</dbReference>
<dbReference type="GO" id="GO:0009295">
    <property type="term" value="C:nucleoid"/>
    <property type="evidence" value="ECO:0007669"/>
    <property type="project" value="UniProtKB-SubCell"/>
</dbReference>
<dbReference type="GO" id="GO:0003700">
    <property type="term" value="F:DNA-binding transcription factor activity"/>
    <property type="evidence" value="ECO:0007669"/>
    <property type="project" value="UniProtKB-UniRule"/>
</dbReference>
<dbReference type="GO" id="GO:0000976">
    <property type="term" value="F:transcription cis-regulatory region binding"/>
    <property type="evidence" value="ECO:0007669"/>
    <property type="project" value="TreeGrafter"/>
</dbReference>
<dbReference type="GO" id="GO:2000143">
    <property type="term" value="P:negative regulation of DNA-templated transcription initiation"/>
    <property type="evidence" value="ECO:0007669"/>
    <property type="project" value="TreeGrafter"/>
</dbReference>
<dbReference type="CDD" id="cd16321">
    <property type="entry name" value="MraZ_C"/>
    <property type="match status" value="1"/>
</dbReference>
<dbReference type="CDD" id="cd16320">
    <property type="entry name" value="MraZ_N"/>
    <property type="match status" value="1"/>
</dbReference>
<dbReference type="FunFam" id="3.40.1550.20:FF:000001">
    <property type="entry name" value="Transcriptional regulator MraZ"/>
    <property type="match status" value="1"/>
</dbReference>
<dbReference type="Gene3D" id="3.40.1550.20">
    <property type="entry name" value="Transcriptional regulator MraZ domain"/>
    <property type="match status" value="1"/>
</dbReference>
<dbReference type="HAMAP" id="MF_01008">
    <property type="entry name" value="MraZ"/>
    <property type="match status" value="1"/>
</dbReference>
<dbReference type="InterPro" id="IPR003444">
    <property type="entry name" value="MraZ"/>
</dbReference>
<dbReference type="InterPro" id="IPR035644">
    <property type="entry name" value="MraZ_C"/>
</dbReference>
<dbReference type="InterPro" id="IPR020603">
    <property type="entry name" value="MraZ_dom"/>
</dbReference>
<dbReference type="InterPro" id="IPR035642">
    <property type="entry name" value="MraZ_N"/>
</dbReference>
<dbReference type="InterPro" id="IPR038619">
    <property type="entry name" value="MraZ_sf"/>
</dbReference>
<dbReference type="InterPro" id="IPR007159">
    <property type="entry name" value="SpoVT-AbrB_dom"/>
</dbReference>
<dbReference type="InterPro" id="IPR037914">
    <property type="entry name" value="SpoVT-AbrB_sf"/>
</dbReference>
<dbReference type="NCBIfam" id="TIGR00242">
    <property type="entry name" value="division/cell wall cluster transcriptional repressor MraZ"/>
    <property type="match status" value="1"/>
</dbReference>
<dbReference type="PANTHER" id="PTHR34701">
    <property type="entry name" value="TRANSCRIPTIONAL REGULATOR MRAZ"/>
    <property type="match status" value="1"/>
</dbReference>
<dbReference type="PANTHER" id="PTHR34701:SF1">
    <property type="entry name" value="TRANSCRIPTIONAL REGULATOR MRAZ"/>
    <property type="match status" value="1"/>
</dbReference>
<dbReference type="Pfam" id="PF02381">
    <property type="entry name" value="MraZ"/>
    <property type="match status" value="2"/>
</dbReference>
<dbReference type="SUPFAM" id="SSF89447">
    <property type="entry name" value="AbrB/MazE/MraZ-like"/>
    <property type="match status" value="1"/>
</dbReference>
<dbReference type="PROSITE" id="PS51740">
    <property type="entry name" value="SPOVT_ABRB"/>
    <property type="match status" value="2"/>
</dbReference>
<keyword id="KW-0963">Cytoplasm</keyword>
<keyword id="KW-0238">DNA-binding</keyword>
<keyword id="KW-0677">Repeat</keyword>
<keyword id="KW-0678">Repressor</keyword>
<keyword id="KW-0804">Transcription</keyword>
<keyword id="KW-0805">Transcription regulation</keyword>
<reference key="1">
    <citation type="journal article" date="2006" name="J. Bacteriol.">
        <title>Complete genome sequence of Yersinia pestis strains Antiqua and Nepal516: evidence of gene reduction in an emerging pathogen.</title>
        <authorList>
            <person name="Chain P.S.G."/>
            <person name="Hu P."/>
            <person name="Malfatti S.A."/>
            <person name="Radnedge L."/>
            <person name="Larimer F."/>
            <person name="Vergez L.M."/>
            <person name="Worsham P."/>
            <person name="Chu M.C."/>
            <person name="Andersen G.L."/>
        </authorList>
    </citation>
    <scope>NUCLEOTIDE SEQUENCE [LARGE SCALE GENOMIC DNA]</scope>
    <source>
        <strain>Antiqua</strain>
    </source>
</reference>
<accession>Q1C205</accession>
<gene>
    <name evidence="1" type="primary">mraZ</name>
    <name type="ordered locus">YPA_3555</name>
</gene>
<sequence length="152" mass="17414">MFRGATMVNLDSKGRLAVPTRYRESLNEESQGQMVCTIDLHQPCLLLYPLPEWEIIEQKLSRLSSMNPAERRVQRLLLGHASECQMDGAGRLLIAGTLRQHAGLNKEVMLVGQFNKFELWDEQTWYQQVKDDIDAEQSTQEPLSERLQGLSL</sequence>